<feature type="chain" id="PRO_0000163574" description="Large ribosomal subunit protein bL19">
    <location>
        <begin position="1"/>
        <end position="136"/>
    </location>
</feature>
<comment type="function">
    <text evidence="1">This protein is located at the 30S-50S ribosomal subunit interface and may play a role in the structure and function of the aminoacyl-tRNA binding site.</text>
</comment>
<comment type="similarity">
    <text evidence="1">Belongs to the bacterial ribosomal protein bL19 family.</text>
</comment>
<organism>
    <name type="scientific">Xylella fastidiosa (strain 9a5c)</name>
    <dbReference type="NCBI Taxonomy" id="160492"/>
    <lineage>
        <taxon>Bacteria</taxon>
        <taxon>Pseudomonadati</taxon>
        <taxon>Pseudomonadota</taxon>
        <taxon>Gammaproteobacteria</taxon>
        <taxon>Lysobacterales</taxon>
        <taxon>Lysobacteraceae</taxon>
        <taxon>Xylella</taxon>
    </lineage>
</organism>
<accession>Q9PH36</accession>
<gene>
    <name evidence="1" type="primary">rplS</name>
    <name type="ordered locus">XF_0110</name>
</gene>
<sequence>MSKLNKSIIAEFESAQITRQVPQFSQGDTIVVNVKVKEGNRERLQAYEGVVIATKNAGLNSAFTVRKISHGYGVERVFQTHSPIIESIEIKRRGKVRAAKLYYLRGLEGKAARIKEDLAATAQEKLARKTVTAKAG</sequence>
<dbReference type="EMBL" id="AE003849">
    <property type="protein sequence ID" value="AAF82923.1"/>
    <property type="molecule type" value="Genomic_DNA"/>
</dbReference>
<dbReference type="PIR" id="C82848">
    <property type="entry name" value="C82848"/>
</dbReference>
<dbReference type="RefSeq" id="WP_010892656.1">
    <property type="nucleotide sequence ID" value="NC_002488.3"/>
</dbReference>
<dbReference type="SMR" id="Q9PH36"/>
<dbReference type="STRING" id="160492.XF_0110"/>
<dbReference type="KEGG" id="xfa:XF_0110"/>
<dbReference type="eggNOG" id="COG0335">
    <property type="taxonomic scope" value="Bacteria"/>
</dbReference>
<dbReference type="HOGENOM" id="CLU_103507_2_1_6"/>
<dbReference type="Proteomes" id="UP000000812">
    <property type="component" value="Chromosome"/>
</dbReference>
<dbReference type="GO" id="GO:0022625">
    <property type="term" value="C:cytosolic large ribosomal subunit"/>
    <property type="evidence" value="ECO:0007669"/>
    <property type="project" value="TreeGrafter"/>
</dbReference>
<dbReference type="GO" id="GO:0003735">
    <property type="term" value="F:structural constituent of ribosome"/>
    <property type="evidence" value="ECO:0007669"/>
    <property type="project" value="InterPro"/>
</dbReference>
<dbReference type="GO" id="GO:0006412">
    <property type="term" value="P:translation"/>
    <property type="evidence" value="ECO:0007669"/>
    <property type="project" value="UniProtKB-UniRule"/>
</dbReference>
<dbReference type="FunFam" id="2.30.30.790:FF:000001">
    <property type="entry name" value="50S ribosomal protein L19"/>
    <property type="match status" value="1"/>
</dbReference>
<dbReference type="Gene3D" id="2.30.30.790">
    <property type="match status" value="1"/>
</dbReference>
<dbReference type="HAMAP" id="MF_00402">
    <property type="entry name" value="Ribosomal_bL19"/>
    <property type="match status" value="1"/>
</dbReference>
<dbReference type="InterPro" id="IPR001857">
    <property type="entry name" value="Ribosomal_bL19"/>
</dbReference>
<dbReference type="InterPro" id="IPR018257">
    <property type="entry name" value="Ribosomal_bL19_CS"/>
</dbReference>
<dbReference type="InterPro" id="IPR038657">
    <property type="entry name" value="Ribosomal_bL19_sf"/>
</dbReference>
<dbReference type="InterPro" id="IPR008991">
    <property type="entry name" value="Translation_prot_SH3-like_sf"/>
</dbReference>
<dbReference type="NCBIfam" id="TIGR01024">
    <property type="entry name" value="rplS_bact"/>
    <property type="match status" value="1"/>
</dbReference>
<dbReference type="PANTHER" id="PTHR15680:SF9">
    <property type="entry name" value="LARGE RIBOSOMAL SUBUNIT PROTEIN BL19M"/>
    <property type="match status" value="1"/>
</dbReference>
<dbReference type="PANTHER" id="PTHR15680">
    <property type="entry name" value="RIBOSOMAL PROTEIN L19"/>
    <property type="match status" value="1"/>
</dbReference>
<dbReference type="Pfam" id="PF01245">
    <property type="entry name" value="Ribosomal_L19"/>
    <property type="match status" value="1"/>
</dbReference>
<dbReference type="PIRSF" id="PIRSF002191">
    <property type="entry name" value="Ribosomal_L19"/>
    <property type="match status" value="1"/>
</dbReference>
<dbReference type="PRINTS" id="PR00061">
    <property type="entry name" value="RIBOSOMALL19"/>
</dbReference>
<dbReference type="SUPFAM" id="SSF50104">
    <property type="entry name" value="Translation proteins SH3-like domain"/>
    <property type="match status" value="1"/>
</dbReference>
<dbReference type="PROSITE" id="PS01015">
    <property type="entry name" value="RIBOSOMAL_L19"/>
    <property type="match status" value="1"/>
</dbReference>
<protein>
    <recommendedName>
        <fullName evidence="1">Large ribosomal subunit protein bL19</fullName>
    </recommendedName>
    <alternativeName>
        <fullName evidence="2">50S ribosomal protein L19</fullName>
    </alternativeName>
</protein>
<evidence type="ECO:0000255" key="1">
    <source>
        <dbReference type="HAMAP-Rule" id="MF_00402"/>
    </source>
</evidence>
<evidence type="ECO:0000305" key="2"/>
<reference key="1">
    <citation type="journal article" date="2000" name="Nature">
        <title>The genome sequence of the plant pathogen Xylella fastidiosa.</title>
        <authorList>
            <person name="Simpson A.J.G."/>
            <person name="Reinach F.C."/>
            <person name="Arruda P."/>
            <person name="Abreu F.A."/>
            <person name="Acencio M."/>
            <person name="Alvarenga R."/>
            <person name="Alves L.M.C."/>
            <person name="Araya J.E."/>
            <person name="Baia G.S."/>
            <person name="Baptista C.S."/>
            <person name="Barros M.H."/>
            <person name="Bonaccorsi E.D."/>
            <person name="Bordin S."/>
            <person name="Bove J.M."/>
            <person name="Briones M.R.S."/>
            <person name="Bueno M.R.P."/>
            <person name="Camargo A.A."/>
            <person name="Camargo L.E.A."/>
            <person name="Carraro D.M."/>
            <person name="Carrer H."/>
            <person name="Colauto N.B."/>
            <person name="Colombo C."/>
            <person name="Costa F.F."/>
            <person name="Costa M.C.R."/>
            <person name="Costa-Neto C.M."/>
            <person name="Coutinho L.L."/>
            <person name="Cristofani M."/>
            <person name="Dias-Neto E."/>
            <person name="Docena C."/>
            <person name="El-Dorry H."/>
            <person name="Facincani A.P."/>
            <person name="Ferreira A.J.S."/>
            <person name="Ferreira V.C.A."/>
            <person name="Ferro J.A."/>
            <person name="Fraga J.S."/>
            <person name="Franca S.C."/>
            <person name="Franco M.C."/>
            <person name="Frohme M."/>
            <person name="Furlan L.R."/>
            <person name="Garnier M."/>
            <person name="Goldman G.H."/>
            <person name="Goldman M.H.S."/>
            <person name="Gomes S.L."/>
            <person name="Gruber A."/>
            <person name="Ho P.L."/>
            <person name="Hoheisel J.D."/>
            <person name="Junqueira M.L."/>
            <person name="Kemper E.L."/>
            <person name="Kitajima J.P."/>
            <person name="Krieger J.E."/>
            <person name="Kuramae E.E."/>
            <person name="Laigret F."/>
            <person name="Lambais M.R."/>
            <person name="Leite L.C.C."/>
            <person name="Lemos E.G.M."/>
            <person name="Lemos M.V.F."/>
            <person name="Lopes S.A."/>
            <person name="Lopes C.R."/>
            <person name="Machado J.A."/>
            <person name="Machado M.A."/>
            <person name="Madeira A.M.B.N."/>
            <person name="Madeira H.M.F."/>
            <person name="Marino C.L."/>
            <person name="Marques M.V."/>
            <person name="Martins E.A.L."/>
            <person name="Martins E.M.F."/>
            <person name="Matsukuma A.Y."/>
            <person name="Menck C.F.M."/>
            <person name="Miracca E.C."/>
            <person name="Miyaki C.Y."/>
            <person name="Monteiro-Vitorello C.B."/>
            <person name="Moon D.H."/>
            <person name="Nagai M.A."/>
            <person name="Nascimento A.L.T.O."/>
            <person name="Netto L.E.S."/>
            <person name="Nhani A. Jr."/>
            <person name="Nobrega F.G."/>
            <person name="Nunes L.R."/>
            <person name="Oliveira M.A."/>
            <person name="de Oliveira M.C."/>
            <person name="de Oliveira R.C."/>
            <person name="Palmieri D.A."/>
            <person name="Paris A."/>
            <person name="Peixoto B.R."/>
            <person name="Pereira G.A.G."/>
            <person name="Pereira H.A. Jr."/>
            <person name="Pesquero J.B."/>
            <person name="Quaggio R.B."/>
            <person name="Roberto P.G."/>
            <person name="Rodrigues V."/>
            <person name="de Rosa A.J.M."/>
            <person name="de Rosa V.E. Jr."/>
            <person name="de Sa R.G."/>
            <person name="Santelli R.V."/>
            <person name="Sawasaki H.E."/>
            <person name="da Silva A.C.R."/>
            <person name="da Silva A.M."/>
            <person name="da Silva F.R."/>
            <person name="Silva W.A. Jr."/>
            <person name="da Silveira J.F."/>
            <person name="Silvestri M.L.Z."/>
            <person name="Siqueira W.J."/>
            <person name="de Souza A.A."/>
            <person name="de Souza A.P."/>
            <person name="Terenzi M.F."/>
            <person name="Truffi D."/>
            <person name="Tsai S.M."/>
            <person name="Tsuhako M.H."/>
            <person name="Vallada H."/>
            <person name="Van Sluys M.A."/>
            <person name="Verjovski-Almeida S."/>
            <person name="Vettore A.L."/>
            <person name="Zago M.A."/>
            <person name="Zatz M."/>
            <person name="Meidanis J."/>
            <person name="Setubal J.C."/>
        </authorList>
    </citation>
    <scope>NUCLEOTIDE SEQUENCE [LARGE SCALE GENOMIC DNA]</scope>
    <source>
        <strain>9a5c</strain>
    </source>
</reference>
<keyword id="KW-0687">Ribonucleoprotein</keyword>
<keyword id="KW-0689">Ribosomal protein</keyword>
<name>RL19_XYLFA</name>
<proteinExistence type="inferred from homology"/>